<gene>
    <name evidence="1" type="primary">rph</name>
    <name type="ordered locus">A1C_04950</name>
</gene>
<protein>
    <recommendedName>
        <fullName evidence="1">Ribonuclease PH</fullName>
        <shortName evidence="1">RNase PH</shortName>
        <ecNumber evidence="1">2.7.7.56</ecNumber>
    </recommendedName>
    <alternativeName>
        <fullName evidence="1">tRNA nucleotidyltransferase</fullName>
    </alternativeName>
</protein>
<organism>
    <name type="scientific">Rickettsia akari (strain Hartford)</name>
    <dbReference type="NCBI Taxonomy" id="293614"/>
    <lineage>
        <taxon>Bacteria</taxon>
        <taxon>Pseudomonadati</taxon>
        <taxon>Pseudomonadota</taxon>
        <taxon>Alphaproteobacteria</taxon>
        <taxon>Rickettsiales</taxon>
        <taxon>Rickettsiaceae</taxon>
        <taxon>Rickettsieae</taxon>
        <taxon>Rickettsia</taxon>
        <taxon>spotted fever group</taxon>
    </lineage>
</organism>
<accession>A8GPB9</accession>
<keyword id="KW-0548">Nucleotidyltransferase</keyword>
<keyword id="KW-0694">RNA-binding</keyword>
<keyword id="KW-0698">rRNA processing</keyword>
<keyword id="KW-0808">Transferase</keyword>
<keyword id="KW-0819">tRNA processing</keyword>
<keyword id="KW-0820">tRNA-binding</keyword>
<sequence>MRQSGRKSNQLRPISLELSPLINTEGSCIIKIGNTHVMCSATCETTVPPFLRGQNQGWVTAEYGMLPGSTSQRIKREAAQGKQGGRTQEIQRLIGRSMRCVMDLKKLGERQIIIDCDVINADGGTRTASITGSYVALHLAIRSLMKKRILKVNPLISQIAAVSCGIYKGEAILDLDYLEDSDAEVDSNFVFAGNGNLIEVQGTAEQEPFSEEQFIEMLKLAKCGAAELFKLQNQVLLGT</sequence>
<dbReference type="EC" id="2.7.7.56" evidence="1"/>
<dbReference type="EMBL" id="CP000847">
    <property type="protein sequence ID" value="ABV75244.1"/>
    <property type="molecule type" value="Genomic_DNA"/>
</dbReference>
<dbReference type="RefSeq" id="WP_012149874.1">
    <property type="nucleotide sequence ID" value="NC_009881.1"/>
</dbReference>
<dbReference type="SMR" id="A8GPB9"/>
<dbReference type="STRING" id="293614.A1C_04950"/>
<dbReference type="KEGG" id="rak:A1C_04950"/>
<dbReference type="eggNOG" id="COG0689">
    <property type="taxonomic scope" value="Bacteria"/>
</dbReference>
<dbReference type="HOGENOM" id="CLU_050858_0_0_5"/>
<dbReference type="Proteomes" id="UP000006830">
    <property type="component" value="Chromosome"/>
</dbReference>
<dbReference type="GO" id="GO:0000175">
    <property type="term" value="F:3'-5'-RNA exonuclease activity"/>
    <property type="evidence" value="ECO:0007669"/>
    <property type="project" value="UniProtKB-UniRule"/>
</dbReference>
<dbReference type="GO" id="GO:0000049">
    <property type="term" value="F:tRNA binding"/>
    <property type="evidence" value="ECO:0007669"/>
    <property type="project" value="UniProtKB-UniRule"/>
</dbReference>
<dbReference type="GO" id="GO:0009022">
    <property type="term" value="F:tRNA nucleotidyltransferase activity"/>
    <property type="evidence" value="ECO:0007669"/>
    <property type="project" value="UniProtKB-UniRule"/>
</dbReference>
<dbReference type="GO" id="GO:0016075">
    <property type="term" value="P:rRNA catabolic process"/>
    <property type="evidence" value="ECO:0007669"/>
    <property type="project" value="UniProtKB-UniRule"/>
</dbReference>
<dbReference type="GO" id="GO:0006364">
    <property type="term" value="P:rRNA processing"/>
    <property type="evidence" value="ECO:0007669"/>
    <property type="project" value="UniProtKB-KW"/>
</dbReference>
<dbReference type="GO" id="GO:0008033">
    <property type="term" value="P:tRNA processing"/>
    <property type="evidence" value="ECO:0007669"/>
    <property type="project" value="UniProtKB-UniRule"/>
</dbReference>
<dbReference type="CDD" id="cd11362">
    <property type="entry name" value="RNase_PH_bact"/>
    <property type="match status" value="1"/>
</dbReference>
<dbReference type="FunFam" id="3.30.230.70:FF:000003">
    <property type="entry name" value="Ribonuclease PH"/>
    <property type="match status" value="1"/>
</dbReference>
<dbReference type="Gene3D" id="3.30.230.70">
    <property type="entry name" value="GHMP Kinase, N-terminal domain"/>
    <property type="match status" value="1"/>
</dbReference>
<dbReference type="HAMAP" id="MF_00564">
    <property type="entry name" value="RNase_PH"/>
    <property type="match status" value="1"/>
</dbReference>
<dbReference type="InterPro" id="IPR001247">
    <property type="entry name" value="ExoRNase_PH_dom1"/>
</dbReference>
<dbReference type="InterPro" id="IPR015847">
    <property type="entry name" value="ExoRNase_PH_dom2"/>
</dbReference>
<dbReference type="InterPro" id="IPR036345">
    <property type="entry name" value="ExoRNase_PH_dom2_sf"/>
</dbReference>
<dbReference type="InterPro" id="IPR027408">
    <property type="entry name" value="PNPase/RNase_PH_dom_sf"/>
</dbReference>
<dbReference type="InterPro" id="IPR020568">
    <property type="entry name" value="Ribosomal_Su5_D2-typ_SF"/>
</dbReference>
<dbReference type="InterPro" id="IPR050080">
    <property type="entry name" value="RNase_PH"/>
</dbReference>
<dbReference type="InterPro" id="IPR002381">
    <property type="entry name" value="RNase_PH_bac-type"/>
</dbReference>
<dbReference type="InterPro" id="IPR018336">
    <property type="entry name" value="RNase_PH_CS"/>
</dbReference>
<dbReference type="NCBIfam" id="TIGR01966">
    <property type="entry name" value="RNasePH"/>
    <property type="match status" value="1"/>
</dbReference>
<dbReference type="PANTHER" id="PTHR11953">
    <property type="entry name" value="EXOSOME COMPLEX COMPONENT"/>
    <property type="match status" value="1"/>
</dbReference>
<dbReference type="PANTHER" id="PTHR11953:SF0">
    <property type="entry name" value="EXOSOME COMPLEX COMPONENT RRP41"/>
    <property type="match status" value="1"/>
</dbReference>
<dbReference type="Pfam" id="PF01138">
    <property type="entry name" value="RNase_PH"/>
    <property type="match status" value="1"/>
</dbReference>
<dbReference type="Pfam" id="PF03725">
    <property type="entry name" value="RNase_PH_C"/>
    <property type="match status" value="1"/>
</dbReference>
<dbReference type="SUPFAM" id="SSF55666">
    <property type="entry name" value="Ribonuclease PH domain 2-like"/>
    <property type="match status" value="1"/>
</dbReference>
<dbReference type="SUPFAM" id="SSF54211">
    <property type="entry name" value="Ribosomal protein S5 domain 2-like"/>
    <property type="match status" value="1"/>
</dbReference>
<dbReference type="PROSITE" id="PS01277">
    <property type="entry name" value="RIBONUCLEASE_PH"/>
    <property type="match status" value="1"/>
</dbReference>
<name>RNPH_RICAH</name>
<comment type="function">
    <text evidence="1">Phosphorolytic 3'-5' exoribonuclease that plays an important role in tRNA 3'-end maturation. Removes nucleotide residues following the 3'-CCA terminus of tRNAs; can also add nucleotides to the ends of RNA molecules by using nucleoside diphosphates as substrates, but this may not be physiologically important. Probably plays a role in initiation of 16S rRNA degradation (leading to ribosome degradation) during starvation.</text>
</comment>
<comment type="catalytic activity">
    <reaction evidence="1">
        <text>tRNA(n+1) + phosphate = tRNA(n) + a ribonucleoside 5'-diphosphate</text>
        <dbReference type="Rhea" id="RHEA:10628"/>
        <dbReference type="Rhea" id="RHEA-COMP:17343"/>
        <dbReference type="Rhea" id="RHEA-COMP:17344"/>
        <dbReference type="ChEBI" id="CHEBI:43474"/>
        <dbReference type="ChEBI" id="CHEBI:57930"/>
        <dbReference type="ChEBI" id="CHEBI:173114"/>
        <dbReference type="EC" id="2.7.7.56"/>
    </reaction>
</comment>
<comment type="subunit">
    <text evidence="1">Homohexameric ring arranged as a trimer of dimers.</text>
</comment>
<comment type="similarity">
    <text evidence="1">Belongs to the RNase PH family.</text>
</comment>
<proteinExistence type="inferred from homology"/>
<feature type="chain" id="PRO_1000024869" description="Ribonuclease PH">
    <location>
        <begin position="1"/>
        <end position="239"/>
    </location>
</feature>
<feature type="binding site" evidence="1">
    <location>
        <position position="86"/>
    </location>
    <ligand>
        <name>phosphate</name>
        <dbReference type="ChEBI" id="CHEBI:43474"/>
        <note>substrate</note>
    </ligand>
</feature>
<feature type="binding site" evidence="1">
    <location>
        <begin position="124"/>
        <end position="126"/>
    </location>
    <ligand>
        <name>phosphate</name>
        <dbReference type="ChEBI" id="CHEBI:43474"/>
        <note>substrate</note>
    </ligand>
</feature>
<reference key="1">
    <citation type="submission" date="2007-09" db="EMBL/GenBank/DDBJ databases">
        <title>Complete genome sequence of Rickettsia akari.</title>
        <authorList>
            <person name="Madan A."/>
            <person name="Fahey J."/>
            <person name="Helton E."/>
            <person name="Ketteman M."/>
            <person name="Madan A."/>
            <person name="Rodrigues S."/>
            <person name="Sanchez A."/>
            <person name="Whiting M."/>
            <person name="Dasch G."/>
            <person name="Eremeeva M."/>
        </authorList>
    </citation>
    <scope>NUCLEOTIDE SEQUENCE [LARGE SCALE GENOMIC DNA]</scope>
    <source>
        <strain>Hartford</strain>
    </source>
</reference>
<evidence type="ECO:0000255" key="1">
    <source>
        <dbReference type="HAMAP-Rule" id="MF_00564"/>
    </source>
</evidence>